<name>CXXC4_XENTR</name>
<proteinExistence type="evidence at transcript level"/>
<accession>Q0VFP6</accession>
<evidence type="ECO:0000250" key="1">
    <source>
        <dbReference type="UniProtKB" id="Q800L6"/>
    </source>
</evidence>
<evidence type="ECO:0000250" key="2">
    <source>
        <dbReference type="UniProtKB" id="Q9EQC9"/>
    </source>
</evidence>
<evidence type="ECO:0000250" key="3">
    <source>
        <dbReference type="UniProtKB" id="Q9H2H0"/>
    </source>
</evidence>
<evidence type="ECO:0000255" key="4">
    <source>
        <dbReference type="PROSITE-ProRule" id="PRU00509"/>
    </source>
</evidence>
<evidence type="ECO:0000256" key="5">
    <source>
        <dbReference type="SAM" id="MobiDB-lite"/>
    </source>
</evidence>
<evidence type="ECO:0000305" key="6"/>
<comment type="function">
    <text evidence="1 3">Acts as a negative regulator of the Wnt signaling pathway required for anterior neural structure formation (By similarity). Binds preferentially to DNA containing cytidine-phosphate-guanosine (CpG) dinucleotides over CpH (H=A, T, and C), hemimethylated-CpG and hemimethylated-hydroxymethyl-CpG (By similarity).</text>
</comment>
<comment type="subcellular location">
    <subcellularLocation>
        <location evidence="2">Cytoplasm</location>
    </subcellularLocation>
</comment>
<comment type="domain">
    <text evidence="3">The CXXC zinc finger mediates binding to CpG-DNA.</text>
</comment>
<comment type="sequence caution" evidence="6">
    <conflict type="erroneous initiation">
        <sequence resource="EMBL-CDS" id="AAI18751"/>
    </conflict>
</comment>
<sequence length="188" mass="20037">MHRNDSQRLGKPGGAPESLQMANNNFLSTLSPEHCRPLAGECMNKLKCGAAEAEIMNLPERVGTFSAIPALGGISLPPGVIVMTALHSPAAASAAVTDSAFQIANLADCPQNNSSGAGGNPAKKKRKRCGVCVPCKRLINCGVCSSCRNRKTGHQICKFRKCEELKKKPGTSLERTPVPSAEAFRWFF</sequence>
<dbReference type="EMBL" id="BC118750">
    <property type="protein sequence ID" value="AAI18751.1"/>
    <property type="status" value="ALT_INIT"/>
    <property type="molecule type" value="mRNA"/>
</dbReference>
<dbReference type="RefSeq" id="NP_001072200.2">
    <property type="nucleotide sequence ID" value="NM_001078732.2"/>
</dbReference>
<dbReference type="SMR" id="Q0VFP6"/>
<dbReference type="FunCoup" id="Q0VFP6">
    <property type="interactions" value="348"/>
</dbReference>
<dbReference type="STRING" id="8364.ENSXETP00000003190"/>
<dbReference type="DNASU" id="779646"/>
<dbReference type="GeneID" id="779646"/>
<dbReference type="KEGG" id="xtr:779646"/>
<dbReference type="CTD" id="80319"/>
<dbReference type="InParanoid" id="Q0VFP6"/>
<dbReference type="OrthoDB" id="8777148at2759"/>
<dbReference type="Proteomes" id="UP000008143">
    <property type="component" value="Chromosome 1"/>
</dbReference>
<dbReference type="GO" id="GO:0005737">
    <property type="term" value="C:cytoplasm"/>
    <property type="evidence" value="ECO:0007669"/>
    <property type="project" value="UniProtKB-SubCell"/>
</dbReference>
<dbReference type="GO" id="GO:0008327">
    <property type="term" value="F:methyl-CpG binding"/>
    <property type="evidence" value="ECO:0000250"/>
    <property type="project" value="UniProtKB"/>
</dbReference>
<dbReference type="GO" id="GO:0008270">
    <property type="term" value="F:zinc ion binding"/>
    <property type="evidence" value="ECO:0000250"/>
    <property type="project" value="UniProtKB"/>
</dbReference>
<dbReference type="GO" id="GO:0016055">
    <property type="term" value="P:Wnt signaling pathway"/>
    <property type="evidence" value="ECO:0007669"/>
    <property type="project" value="UniProtKB-KW"/>
</dbReference>
<dbReference type="GO" id="GO:0007352">
    <property type="term" value="P:zygotic specification of dorsal/ventral axis"/>
    <property type="evidence" value="ECO:0000314"/>
    <property type="project" value="BHF-UCL"/>
</dbReference>
<dbReference type="InterPro" id="IPR040388">
    <property type="entry name" value="CXXC4/CXXC5"/>
</dbReference>
<dbReference type="InterPro" id="IPR002857">
    <property type="entry name" value="Znf_CXXC"/>
</dbReference>
<dbReference type="PANTHER" id="PTHR13419:SF1">
    <property type="entry name" value="CXXC-TYPE ZINC FINGER PROTEIN 4"/>
    <property type="match status" value="1"/>
</dbReference>
<dbReference type="PANTHER" id="PTHR13419">
    <property type="entry name" value="ZINC FINGER-CONTAINING"/>
    <property type="match status" value="1"/>
</dbReference>
<dbReference type="Pfam" id="PF02008">
    <property type="entry name" value="zf-CXXC"/>
    <property type="match status" value="1"/>
</dbReference>
<dbReference type="PROSITE" id="PS51058">
    <property type="entry name" value="ZF_CXXC"/>
    <property type="match status" value="1"/>
</dbReference>
<feature type="chain" id="PRO_0000317546" description="CXXC-type zinc finger protein 4">
    <location>
        <begin position="1"/>
        <end position="188"/>
    </location>
</feature>
<feature type="zinc finger region" description="CXXC-type" evidence="4">
    <location>
        <begin position="122"/>
        <end position="163"/>
    </location>
</feature>
<feature type="region of interest" description="Disordered" evidence="5">
    <location>
        <begin position="1"/>
        <end position="20"/>
    </location>
</feature>
<feature type="binding site" evidence="4">
    <location>
        <position position="129"/>
    </location>
    <ligand>
        <name>Zn(2+)</name>
        <dbReference type="ChEBI" id="CHEBI:29105"/>
        <label>1</label>
    </ligand>
</feature>
<feature type="binding site" evidence="4">
    <location>
        <position position="132"/>
    </location>
    <ligand>
        <name>Zn(2+)</name>
        <dbReference type="ChEBI" id="CHEBI:29105"/>
        <label>1</label>
    </ligand>
</feature>
<feature type="binding site" evidence="4">
    <location>
        <position position="135"/>
    </location>
    <ligand>
        <name>Zn(2+)</name>
        <dbReference type="ChEBI" id="CHEBI:29105"/>
        <label>1</label>
    </ligand>
</feature>
<feature type="binding site" evidence="4">
    <location>
        <position position="141"/>
    </location>
    <ligand>
        <name>Zn(2+)</name>
        <dbReference type="ChEBI" id="CHEBI:29105"/>
        <label>2</label>
    </ligand>
</feature>
<feature type="binding site" evidence="4">
    <location>
        <position position="144"/>
    </location>
    <ligand>
        <name>Zn(2+)</name>
        <dbReference type="ChEBI" id="CHEBI:29105"/>
        <label>2</label>
    </ligand>
</feature>
<feature type="binding site" evidence="4">
    <location>
        <position position="147"/>
    </location>
    <ligand>
        <name>Zn(2+)</name>
        <dbReference type="ChEBI" id="CHEBI:29105"/>
        <label>2</label>
    </ligand>
</feature>
<feature type="binding site" evidence="4">
    <location>
        <position position="157"/>
    </location>
    <ligand>
        <name>Zn(2+)</name>
        <dbReference type="ChEBI" id="CHEBI:29105"/>
        <label>2</label>
    </ligand>
</feature>
<feature type="binding site" evidence="4">
    <location>
        <position position="162"/>
    </location>
    <ligand>
        <name>Zn(2+)</name>
        <dbReference type="ChEBI" id="CHEBI:29105"/>
        <label>1</label>
    </ligand>
</feature>
<gene>
    <name type="primary">cxxc4</name>
</gene>
<protein>
    <recommendedName>
        <fullName>CXXC-type zinc finger protein 4</fullName>
    </recommendedName>
</protein>
<keyword id="KW-0963">Cytoplasm</keyword>
<keyword id="KW-0238">DNA-binding</keyword>
<keyword id="KW-0479">Metal-binding</keyword>
<keyword id="KW-1185">Reference proteome</keyword>
<keyword id="KW-0879">Wnt signaling pathway</keyword>
<keyword id="KW-0862">Zinc</keyword>
<keyword id="KW-0863">Zinc-finger</keyword>
<reference key="1">
    <citation type="submission" date="2006-07" db="EMBL/GenBank/DDBJ databases">
        <authorList>
            <consortium name="NIH - Xenopus Gene Collection (XGC) project"/>
        </authorList>
    </citation>
    <scope>NUCLEOTIDE SEQUENCE [LARGE SCALE MRNA]</scope>
    <source>
        <tissue>Brain</tissue>
    </source>
</reference>
<organism>
    <name type="scientific">Xenopus tropicalis</name>
    <name type="common">Western clawed frog</name>
    <name type="synonym">Silurana tropicalis</name>
    <dbReference type="NCBI Taxonomy" id="8364"/>
    <lineage>
        <taxon>Eukaryota</taxon>
        <taxon>Metazoa</taxon>
        <taxon>Chordata</taxon>
        <taxon>Craniata</taxon>
        <taxon>Vertebrata</taxon>
        <taxon>Euteleostomi</taxon>
        <taxon>Amphibia</taxon>
        <taxon>Batrachia</taxon>
        <taxon>Anura</taxon>
        <taxon>Pipoidea</taxon>
        <taxon>Pipidae</taxon>
        <taxon>Xenopodinae</taxon>
        <taxon>Xenopus</taxon>
        <taxon>Silurana</taxon>
    </lineage>
</organism>